<sequence length="109" mass="12519">MSAQPVDIQIFGRALRVNCPPEQLDALNQAAEDLNQRLQDLKVRTRVTNTEQLVFIAALNVCHELAQERLKTRDYAANMEQRIRMLQQTIEQALLEQGRITERPGTSFE</sequence>
<proteinExistence type="inferred from homology"/>
<feature type="chain" id="PRO_1000216411" description="Cell division protein ZapA">
    <location>
        <begin position="1"/>
        <end position="109"/>
    </location>
</feature>
<feature type="coiled-coil region" evidence="1">
    <location>
        <begin position="21"/>
        <end position="99"/>
    </location>
</feature>
<reference key="1">
    <citation type="submission" date="2009-03" db="EMBL/GenBank/DDBJ databases">
        <title>Complete genome sequence of Edwardsiella ictaluri 93-146.</title>
        <authorList>
            <person name="Williams M.L."/>
            <person name="Gillaspy A.F."/>
            <person name="Dyer D.W."/>
            <person name="Thune R.L."/>
            <person name="Waldbieser G.C."/>
            <person name="Schuster S.C."/>
            <person name="Gipson J."/>
            <person name="Zaitshik J."/>
            <person name="Landry C."/>
            <person name="Lawrence M.L."/>
        </authorList>
    </citation>
    <scope>NUCLEOTIDE SEQUENCE [LARGE SCALE GENOMIC DNA]</scope>
    <source>
        <strain>93-146</strain>
    </source>
</reference>
<gene>
    <name evidence="1" type="primary">zapA</name>
    <name type="ordered locus">NT01EI_3358</name>
</gene>
<dbReference type="EMBL" id="CP001600">
    <property type="protein sequence ID" value="ACR70496.1"/>
    <property type="molecule type" value="Genomic_DNA"/>
</dbReference>
<dbReference type="RefSeq" id="WP_005282128.1">
    <property type="nucleotide sequence ID" value="NZ_CP169062.1"/>
</dbReference>
<dbReference type="SMR" id="C5BAT7"/>
<dbReference type="STRING" id="67780.B6E78_08475"/>
<dbReference type="GeneID" id="93125243"/>
<dbReference type="KEGG" id="eic:NT01EI_3358"/>
<dbReference type="HOGENOM" id="CLU_116623_3_0_6"/>
<dbReference type="OrthoDB" id="5917174at2"/>
<dbReference type="Proteomes" id="UP000001485">
    <property type="component" value="Chromosome"/>
</dbReference>
<dbReference type="GO" id="GO:0032153">
    <property type="term" value="C:cell division site"/>
    <property type="evidence" value="ECO:0007669"/>
    <property type="project" value="TreeGrafter"/>
</dbReference>
<dbReference type="GO" id="GO:0030428">
    <property type="term" value="C:cell septum"/>
    <property type="evidence" value="ECO:0007669"/>
    <property type="project" value="TreeGrafter"/>
</dbReference>
<dbReference type="GO" id="GO:0005829">
    <property type="term" value="C:cytosol"/>
    <property type="evidence" value="ECO:0007669"/>
    <property type="project" value="TreeGrafter"/>
</dbReference>
<dbReference type="GO" id="GO:0005886">
    <property type="term" value="C:plasma membrane"/>
    <property type="evidence" value="ECO:0007669"/>
    <property type="project" value="UniProtKB-UniRule"/>
</dbReference>
<dbReference type="GO" id="GO:0000917">
    <property type="term" value="P:division septum assembly"/>
    <property type="evidence" value="ECO:0007669"/>
    <property type="project" value="UniProtKB-KW"/>
</dbReference>
<dbReference type="GO" id="GO:0043093">
    <property type="term" value="P:FtsZ-dependent cytokinesis"/>
    <property type="evidence" value="ECO:0007669"/>
    <property type="project" value="TreeGrafter"/>
</dbReference>
<dbReference type="GO" id="GO:0000921">
    <property type="term" value="P:septin ring assembly"/>
    <property type="evidence" value="ECO:0007669"/>
    <property type="project" value="TreeGrafter"/>
</dbReference>
<dbReference type="FunFam" id="1.20.5.50:FF:000001">
    <property type="entry name" value="Cell division protein ZapA"/>
    <property type="match status" value="1"/>
</dbReference>
<dbReference type="FunFam" id="3.30.160.880:FF:000001">
    <property type="entry name" value="Cell division protein ZapA"/>
    <property type="match status" value="1"/>
</dbReference>
<dbReference type="Gene3D" id="1.20.5.50">
    <property type="match status" value="1"/>
</dbReference>
<dbReference type="Gene3D" id="3.30.160.880">
    <property type="entry name" value="Cell division protein ZapA protomer, N-terminal domain"/>
    <property type="match status" value="1"/>
</dbReference>
<dbReference type="HAMAP" id="MF_02012">
    <property type="entry name" value="ZapA_type1"/>
    <property type="match status" value="1"/>
</dbReference>
<dbReference type="InterPro" id="IPR007838">
    <property type="entry name" value="Cell_div_ZapA-like"/>
</dbReference>
<dbReference type="InterPro" id="IPR036192">
    <property type="entry name" value="Cell_div_ZapA-like_sf"/>
</dbReference>
<dbReference type="InterPro" id="IPR023771">
    <property type="entry name" value="Cell_div_ZapA_eubact"/>
</dbReference>
<dbReference type="InterPro" id="IPR042233">
    <property type="entry name" value="Cell_div_ZapA_N"/>
</dbReference>
<dbReference type="NCBIfam" id="NF008209">
    <property type="entry name" value="PRK10972.1"/>
    <property type="match status" value="1"/>
</dbReference>
<dbReference type="PANTHER" id="PTHR34981">
    <property type="entry name" value="CELL DIVISION PROTEIN ZAPA"/>
    <property type="match status" value="1"/>
</dbReference>
<dbReference type="PANTHER" id="PTHR34981:SF1">
    <property type="entry name" value="CELL DIVISION PROTEIN ZAPA"/>
    <property type="match status" value="1"/>
</dbReference>
<dbReference type="Pfam" id="PF05164">
    <property type="entry name" value="ZapA"/>
    <property type="match status" value="1"/>
</dbReference>
<dbReference type="SUPFAM" id="SSF102829">
    <property type="entry name" value="Cell division protein ZapA-like"/>
    <property type="match status" value="1"/>
</dbReference>
<accession>C5BAT7</accession>
<name>ZAPA_EDWI9</name>
<organism>
    <name type="scientific">Edwardsiella ictaluri (strain 93-146)</name>
    <dbReference type="NCBI Taxonomy" id="634503"/>
    <lineage>
        <taxon>Bacteria</taxon>
        <taxon>Pseudomonadati</taxon>
        <taxon>Pseudomonadota</taxon>
        <taxon>Gammaproteobacteria</taxon>
        <taxon>Enterobacterales</taxon>
        <taxon>Hafniaceae</taxon>
        <taxon>Edwardsiella</taxon>
    </lineage>
</organism>
<evidence type="ECO:0000255" key="1">
    <source>
        <dbReference type="HAMAP-Rule" id="MF_02012"/>
    </source>
</evidence>
<keyword id="KW-0131">Cell cycle</keyword>
<keyword id="KW-0132">Cell division</keyword>
<keyword id="KW-0175">Coiled coil</keyword>
<keyword id="KW-0963">Cytoplasm</keyword>
<keyword id="KW-0717">Septation</keyword>
<protein>
    <recommendedName>
        <fullName evidence="1">Cell division protein ZapA</fullName>
    </recommendedName>
    <alternativeName>
        <fullName evidence="1">Z ring-associated protein ZapA</fullName>
    </alternativeName>
</protein>
<comment type="function">
    <text evidence="1">Activator of cell division through the inhibition of FtsZ GTPase activity, therefore promoting FtsZ assembly into bundles of protofilaments necessary for the formation of the division Z ring. It is recruited early at mid-cell but it is not essential for cell division.</text>
</comment>
<comment type="subunit">
    <text evidence="1">Homodimer. Interacts with FtsZ.</text>
</comment>
<comment type="subcellular location">
    <subcellularLocation>
        <location evidence="1">Cytoplasm</location>
    </subcellularLocation>
    <text evidence="1">Localizes at mid-cell.</text>
</comment>
<comment type="similarity">
    <text evidence="1">Belongs to the ZapA family. Type 1 subfamily.</text>
</comment>